<accession>Q4X1D2</accession>
<organism>
    <name type="scientific">Aspergillus fumigatus (strain ATCC MYA-4609 / CBS 101355 / FGSC A1100 / Af293)</name>
    <name type="common">Neosartorya fumigata</name>
    <dbReference type="NCBI Taxonomy" id="330879"/>
    <lineage>
        <taxon>Eukaryota</taxon>
        <taxon>Fungi</taxon>
        <taxon>Dikarya</taxon>
        <taxon>Ascomycota</taxon>
        <taxon>Pezizomycotina</taxon>
        <taxon>Eurotiomycetes</taxon>
        <taxon>Eurotiomycetidae</taxon>
        <taxon>Eurotiales</taxon>
        <taxon>Aspergillaceae</taxon>
        <taxon>Aspergillus</taxon>
        <taxon>Aspergillus subgen. Fumigati</taxon>
    </lineage>
</organism>
<reference key="1">
    <citation type="journal article" date="2005" name="Nature">
        <title>Genomic sequence of the pathogenic and allergenic filamentous fungus Aspergillus fumigatus.</title>
        <authorList>
            <person name="Nierman W.C."/>
            <person name="Pain A."/>
            <person name="Anderson M.J."/>
            <person name="Wortman J.R."/>
            <person name="Kim H.S."/>
            <person name="Arroyo J."/>
            <person name="Berriman M."/>
            <person name="Abe K."/>
            <person name="Archer D.B."/>
            <person name="Bermejo C."/>
            <person name="Bennett J.W."/>
            <person name="Bowyer P."/>
            <person name="Chen D."/>
            <person name="Collins M."/>
            <person name="Coulsen R."/>
            <person name="Davies R."/>
            <person name="Dyer P.S."/>
            <person name="Farman M.L."/>
            <person name="Fedorova N."/>
            <person name="Fedorova N.D."/>
            <person name="Feldblyum T.V."/>
            <person name="Fischer R."/>
            <person name="Fosker N."/>
            <person name="Fraser A."/>
            <person name="Garcia J.L."/>
            <person name="Garcia M.J."/>
            <person name="Goble A."/>
            <person name="Goldman G.H."/>
            <person name="Gomi K."/>
            <person name="Griffith-Jones S."/>
            <person name="Gwilliam R."/>
            <person name="Haas B.J."/>
            <person name="Haas H."/>
            <person name="Harris D.E."/>
            <person name="Horiuchi H."/>
            <person name="Huang J."/>
            <person name="Humphray S."/>
            <person name="Jimenez J."/>
            <person name="Keller N."/>
            <person name="Khouri H."/>
            <person name="Kitamoto K."/>
            <person name="Kobayashi T."/>
            <person name="Konzack S."/>
            <person name="Kulkarni R."/>
            <person name="Kumagai T."/>
            <person name="Lafton A."/>
            <person name="Latge J.-P."/>
            <person name="Li W."/>
            <person name="Lord A."/>
            <person name="Lu C."/>
            <person name="Majoros W.H."/>
            <person name="May G.S."/>
            <person name="Miller B.L."/>
            <person name="Mohamoud Y."/>
            <person name="Molina M."/>
            <person name="Monod M."/>
            <person name="Mouyna I."/>
            <person name="Mulligan S."/>
            <person name="Murphy L.D."/>
            <person name="O'Neil S."/>
            <person name="Paulsen I."/>
            <person name="Penalva M.A."/>
            <person name="Pertea M."/>
            <person name="Price C."/>
            <person name="Pritchard B.L."/>
            <person name="Quail M.A."/>
            <person name="Rabbinowitsch E."/>
            <person name="Rawlins N."/>
            <person name="Rajandream M.A."/>
            <person name="Reichard U."/>
            <person name="Renauld H."/>
            <person name="Robson G.D."/>
            <person name="Rodriguez de Cordoba S."/>
            <person name="Rodriguez-Pena J.M."/>
            <person name="Ronning C.M."/>
            <person name="Rutter S."/>
            <person name="Salzberg S.L."/>
            <person name="Sanchez M."/>
            <person name="Sanchez-Ferrero J.C."/>
            <person name="Saunders D."/>
            <person name="Seeger K."/>
            <person name="Squares R."/>
            <person name="Squares S."/>
            <person name="Takeuchi M."/>
            <person name="Tekaia F."/>
            <person name="Turner G."/>
            <person name="Vazquez de Aldana C.R."/>
            <person name="Weidman J."/>
            <person name="White O."/>
            <person name="Woodward J.R."/>
            <person name="Yu J.-H."/>
            <person name="Fraser C.M."/>
            <person name="Galagan J.E."/>
            <person name="Asai K."/>
            <person name="Machida M."/>
            <person name="Hall N."/>
            <person name="Barrell B.G."/>
            <person name="Denning D.W."/>
        </authorList>
    </citation>
    <scope>NUCLEOTIDE SEQUENCE [LARGE SCALE GENOMIC DNA]</scope>
    <source>
        <strain>ATCC MYA-4609 / CBS 101355 / FGSC A1100 / Af293</strain>
    </source>
</reference>
<sequence>MSYEERVNAHPNLGDESDVEEEALVNDYREQVNFDDGMSELDRTTSLGTGSQTQDLQAQLAAAATPLEYQATLETKFASYDNYCSLFHYILNSEGPVELEVPSYYWAWDVIDEFIYQFESFCRYRNRVARSGSNEEEAQLLRENPNTWGCYSVLNVLYSLIQKSQINEQLAAIKRGEDPLAFAGEYGSRPLYKMLGYFSIIGLLRVHCLLGDFSLALKTLDDIEMNKKAMFARVMAAHFTTYYYVGFSYMMMRRYGDAIRMFSHILVYVSRTKNFQKGGNSYDAIAKKNDQMYALIAICVALHPTRLDDTIHSALREKYGEQLLRLQHGGPDALPLFEELFRSACPKFISPTPPDFDNPALNIDPVDHHTAIFMDEVKNTLYNPTIRSYLKLYTTMDLKKLAGFLEVQPEVLRSWLLVNKQRSRQVRWVEGGLLEGEVVSANDLDYALENDLIHVSETKAGRRLVDWYLRNLARVY</sequence>
<gene>
    <name type="ORF">AFUA_2G10380</name>
</gene>
<protein>
    <recommendedName>
        <fullName evidence="1">Eukaryotic translation initiation factor 3 subunit L</fullName>
        <shortName evidence="1">eIF3l</shortName>
    </recommendedName>
</protein>
<proteinExistence type="inferred from homology"/>
<dbReference type="EMBL" id="AAHF01000001">
    <property type="protein sequence ID" value="EAL93333.1"/>
    <property type="molecule type" value="Genomic_DNA"/>
</dbReference>
<dbReference type="RefSeq" id="XP_755371.1">
    <property type="nucleotide sequence ID" value="XM_750278.1"/>
</dbReference>
<dbReference type="SMR" id="Q4X1D2"/>
<dbReference type="STRING" id="330879.Q4X1D2"/>
<dbReference type="EnsemblFungi" id="EAL93333">
    <property type="protein sequence ID" value="EAL93333"/>
    <property type="gene ID" value="AFUA_2G10380"/>
</dbReference>
<dbReference type="GeneID" id="3512701"/>
<dbReference type="KEGG" id="afm:AFUA_2G10380"/>
<dbReference type="VEuPathDB" id="FungiDB:Afu2g10380"/>
<dbReference type="eggNOG" id="KOG3677">
    <property type="taxonomic scope" value="Eukaryota"/>
</dbReference>
<dbReference type="HOGENOM" id="CLU_029210_2_0_1"/>
<dbReference type="InParanoid" id="Q4X1D2"/>
<dbReference type="OMA" id="AGWFIRN"/>
<dbReference type="OrthoDB" id="15082at2759"/>
<dbReference type="Proteomes" id="UP000002530">
    <property type="component" value="Chromosome 2"/>
</dbReference>
<dbReference type="GO" id="GO:0016282">
    <property type="term" value="C:eukaryotic 43S preinitiation complex"/>
    <property type="evidence" value="ECO:0007669"/>
    <property type="project" value="UniProtKB-UniRule"/>
</dbReference>
<dbReference type="GO" id="GO:0033290">
    <property type="term" value="C:eukaryotic 48S preinitiation complex"/>
    <property type="evidence" value="ECO:0007669"/>
    <property type="project" value="UniProtKB-UniRule"/>
</dbReference>
<dbReference type="GO" id="GO:0005852">
    <property type="term" value="C:eukaryotic translation initiation factor 3 complex"/>
    <property type="evidence" value="ECO:0000318"/>
    <property type="project" value="GO_Central"/>
</dbReference>
<dbReference type="GO" id="GO:0003743">
    <property type="term" value="F:translation initiation factor activity"/>
    <property type="evidence" value="ECO:0007669"/>
    <property type="project" value="UniProtKB-UniRule"/>
</dbReference>
<dbReference type="GO" id="GO:0001732">
    <property type="term" value="P:formation of cytoplasmic translation initiation complex"/>
    <property type="evidence" value="ECO:0007669"/>
    <property type="project" value="UniProtKB-UniRule"/>
</dbReference>
<dbReference type="GO" id="GO:0006413">
    <property type="term" value="P:translational initiation"/>
    <property type="evidence" value="ECO:0000318"/>
    <property type="project" value="GO_Central"/>
</dbReference>
<dbReference type="HAMAP" id="MF_03011">
    <property type="entry name" value="eIF3l"/>
    <property type="match status" value="1"/>
</dbReference>
<dbReference type="InterPro" id="IPR019382">
    <property type="entry name" value="eIF3l"/>
</dbReference>
<dbReference type="InterPro" id="IPR000717">
    <property type="entry name" value="PCI_dom"/>
</dbReference>
<dbReference type="PANTHER" id="PTHR13242">
    <property type="entry name" value="EUKARYOTIC TRANSLATION INITIATION FACTOR 3"/>
    <property type="match status" value="1"/>
</dbReference>
<dbReference type="PANTHER" id="PTHR13242:SF0">
    <property type="entry name" value="EUKARYOTIC TRANSLATION INITIATION FACTOR 3 SUBUNIT L"/>
    <property type="match status" value="1"/>
</dbReference>
<dbReference type="Pfam" id="PF10255">
    <property type="entry name" value="Paf67"/>
    <property type="match status" value="1"/>
</dbReference>
<dbReference type="PROSITE" id="PS50250">
    <property type="entry name" value="PCI"/>
    <property type="match status" value="1"/>
</dbReference>
<comment type="function">
    <text evidence="1">Component of the eukaryotic translation initiation factor 3 (eIF-3) complex, which is involved in protein synthesis of a specialized repertoire of mRNAs and, together with other initiation factors, stimulates binding of mRNA and methionyl-tRNAi to the 40S ribosome. The eIF-3 complex specifically targets and initiates translation of a subset of mRNAs involved in cell proliferation.</text>
</comment>
<comment type="subunit">
    <text evidence="1">Component of the eukaryotic translation initiation factor 3 (eIF-3) complex.</text>
</comment>
<comment type="subcellular location">
    <subcellularLocation>
        <location evidence="1">Cytoplasm</location>
    </subcellularLocation>
</comment>
<comment type="similarity">
    <text evidence="1">Belongs to the eIF-3 subunit L family.</text>
</comment>
<feature type="chain" id="PRO_0000364257" description="Eukaryotic translation initiation factor 3 subunit L">
    <location>
        <begin position="1"/>
        <end position="476"/>
    </location>
</feature>
<feature type="domain" description="PCI" evidence="2">
    <location>
        <begin position="257"/>
        <end position="452"/>
    </location>
</feature>
<keyword id="KW-0963">Cytoplasm</keyword>
<keyword id="KW-0396">Initiation factor</keyword>
<keyword id="KW-0648">Protein biosynthesis</keyword>
<keyword id="KW-1185">Reference proteome</keyword>
<name>EIF3L_ASPFU</name>
<evidence type="ECO:0000255" key="1">
    <source>
        <dbReference type="HAMAP-Rule" id="MF_03011"/>
    </source>
</evidence>
<evidence type="ECO:0000255" key="2">
    <source>
        <dbReference type="PROSITE-ProRule" id="PRU01185"/>
    </source>
</evidence>